<evidence type="ECO:0000250" key="1"/>
<evidence type="ECO:0000255" key="2">
    <source>
        <dbReference type="PROSITE-ProRule" id="PRU00609"/>
    </source>
</evidence>
<proteinExistence type="evidence at transcript level"/>
<comment type="function">
    <text>Could play a role in remobilization of nitrogen in flowers during senescence.</text>
</comment>
<comment type="catalytic activity">
    <reaction>
        <text>L-aspartate + L-glutamine + ATP + H2O = L-asparagine + L-glutamate + AMP + diphosphate + H(+)</text>
        <dbReference type="Rhea" id="RHEA:12228"/>
        <dbReference type="ChEBI" id="CHEBI:15377"/>
        <dbReference type="ChEBI" id="CHEBI:15378"/>
        <dbReference type="ChEBI" id="CHEBI:29985"/>
        <dbReference type="ChEBI" id="CHEBI:29991"/>
        <dbReference type="ChEBI" id="CHEBI:30616"/>
        <dbReference type="ChEBI" id="CHEBI:33019"/>
        <dbReference type="ChEBI" id="CHEBI:58048"/>
        <dbReference type="ChEBI" id="CHEBI:58359"/>
        <dbReference type="ChEBI" id="CHEBI:456215"/>
        <dbReference type="EC" id="6.3.5.4"/>
    </reaction>
</comment>
<comment type="pathway">
    <text>Amino-acid biosynthesis; L-asparagine biosynthesis; L-asparagine from L-aspartate (L-Gln route): step 1/1.</text>
</comment>
<sequence>MCGILAVLGCSDDSQAKRVRVLELSRRLKHRGPDWSGLDHHGDCYLAHQRLAIIDPASGDQPLYNEDKTIIVTVNGEIYNHEELRKGLPGHTFRTGSDCEVIAHLYEEHGESFIHMLDGIFSFVLLDSRNNSFVAARDAIGVTPLYIGWGLDGSVWISSEMKGLNDDCEHFKFFPPGHLYSSKEGSFKRWYNPPWFSEVIPSVPFDPLALRKAFEDAVIKRLMTDVPFGVLLSGGLDSSLVASVTARYLEGTKAAELWGTQLHSFCVGLEGSPDLKAAKEVANFLGTIHHEFHFTVQDGIDAIEDVIYHVETYDVTTIRASTPMFLMSRKIKSLGVKMVISGEGSDEIFGGYLYFHKAPNKEELHLETCHKIKALHQYDCLRANKATSAWGLEARVPFLDKEFVNVAMSIDPEWKMIKPDIGRIEKWILRRAFDDEENPYLPKHILYRQKEQFSDGVGYSWIDGLKAHSALHVTDKMMLNAAHIYPHNTPTTKEAYYYRMIFERFFPQIDSPWRSKCGLQHSKSY</sequence>
<keyword id="KW-0028">Amino-acid biosynthesis</keyword>
<keyword id="KW-0061">Asparagine biosynthesis</keyword>
<keyword id="KW-0067">ATP-binding</keyword>
<keyword id="KW-0315">Glutamine amidotransferase</keyword>
<keyword id="KW-0436">Ligase</keyword>
<keyword id="KW-0547">Nucleotide-binding</keyword>
<dbReference type="EC" id="6.3.5.4"/>
<dbReference type="EMBL" id="AF005724">
    <property type="protein sequence ID" value="AAB71532.1"/>
    <property type="molecule type" value="mRNA"/>
</dbReference>
<dbReference type="SMR" id="O24338"/>
<dbReference type="UniPathway" id="UPA00134">
    <property type="reaction ID" value="UER00195"/>
</dbReference>
<dbReference type="GO" id="GO:0005829">
    <property type="term" value="C:cytosol"/>
    <property type="evidence" value="ECO:0007669"/>
    <property type="project" value="TreeGrafter"/>
</dbReference>
<dbReference type="GO" id="GO:0004066">
    <property type="term" value="F:asparagine synthase (glutamine-hydrolyzing) activity"/>
    <property type="evidence" value="ECO:0007669"/>
    <property type="project" value="UniProtKB-EC"/>
</dbReference>
<dbReference type="GO" id="GO:0005524">
    <property type="term" value="F:ATP binding"/>
    <property type="evidence" value="ECO:0007669"/>
    <property type="project" value="UniProtKB-KW"/>
</dbReference>
<dbReference type="GO" id="GO:0070981">
    <property type="term" value="P:L-asparagine biosynthetic process"/>
    <property type="evidence" value="ECO:0007669"/>
    <property type="project" value="UniProtKB-UniPathway"/>
</dbReference>
<dbReference type="CDD" id="cd01991">
    <property type="entry name" value="Asn_synthase_B_C"/>
    <property type="match status" value="1"/>
</dbReference>
<dbReference type="CDD" id="cd00712">
    <property type="entry name" value="AsnB"/>
    <property type="match status" value="1"/>
</dbReference>
<dbReference type="FunFam" id="3.40.50.620:FF:000055">
    <property type="entry name" value="Asparagine synthetase [glutamine-hydrolyzing]"/>
    <property type="match status" value="1"/>
</dbReference>
<dbReference type="FunFam" id="3.60.20.10:FF:000024">
    <property type="entry name" value="Asparagine synthetase [glutamine-hydrolyzing]"/>
    <property type="match status" value="1"/>
</dbReference>
<dbReference type="Gene3D" id="3.60.20.10">
    <property type="entry name" value="Glutamine Phosphoribosylpyrophosphate, subunit 1, domain 1"/>
    <property type="match status" value="1"/>
</dbReference>
<dbReference type="Gene3D" id="3.40.50.620">
    <property type="entry name" value="HUPs"/>
    <property type="match status" value="1"/>
</dbReference>
<dbReference type="InterPro" id="IPR006426">
    <property type="entry name" value="Asn_synth_AEB"/>
</dbReference>
<dbReference type="InterPro" id="IPR001962">
    <property type="entry name" value="Asn_synthase"/>
</dbReference>
<dbReference type="InterPro" id="IPR050795">
    <property type="entry name" value="Asn_Synthetase"/>
</dbReference>
<dbReference type="InterPro" id="IPR033738">
    <property type="entry name" value="AsnB_N"/>
</dbReference>
<dbReference type="InterPro" id="IPR017932">
    <property type="entry name" value="GATase_2_dom"/>
</dbReference>
<dbReference type="InterPro" id="IPR029055">
    <property type="entry name" value="Ntn_hydrolases_N"/>
</dbReference>
<dbReference type="InterPro" id="IPR014729">
    <property type="entry name" value="Rossmann-like_a/b/a_fold"/>
</dbReference>
<dbReference type="NCBIfam" id="NF006949">
    <property type="entry name" value="PRK09431.1"/>
    <property type="match status" value="1"/>
</dbReference>
<dbReference type="PANTHER" id="PTHR11772">
    <property type="entry name" value="ASPARAGINE SYNTHETASE"/>
    <property type="match status" value="1"/>
</dbReference>
<dbReference type="PANTHER" id="PTHR11772:SF48">
    <property type="entry name" value="ASPARAGINE SYNTHETASE [GLUTAMINE-HYDROLYZING] 1"/>
    <property type="match status" value="1"/>
</dbReference>
<dbReference type="Pfam" id="PF00733">
    <property type="entry name" value="Asn_synthase"/>
    <property type="match status" value="1"/>
</dbReference>
<dbReference type="Pfam" id="PF13537">
    <property type="entry name" value="GATase_7"/>
    <property type="match status" value="1"/>
</dbReference>
<dbReference type="PIRSF" id="PIRSF001589">
    <property type="entry name" value="Asn_synthetase_glu-h"/>
    <property type="match status" value="1"/>
</dbReference>
<dbReference type="SUPFAM" id="SSF52402">
    <property type="entry name" value="Adenine nucleotide alpha hydrolases-like"/>
    <property type="match status" value="1"/>
</dbReference>
<dbReference type="SUPFAM" id="SSF56235">
    <property type="entry name" value="N-terminal nucleophile aminohydrolases (Ntn hydrolases)"/>
    <property type="match status" value="1"/>
</dbReference>
<dbReference type="PROSITE" id="PS51278">
    <property type="entry name" value="GATASE_TYPE_2"/>
    <property type="match status" value="1"/>
</dbReference>
<gene>
    <name type="primary">AND1</name>
</gene>
<protein>
    <recommendedName>
        <fullName>Asparagine synthetase [glutamine-hydrolyzing]</fullName>
        <ecNumber>6.3.5.4</ecNumber>
    </recommendedName>
    <alternativeName>
        <fullName>Glutamine-dependent asparagine synthetase</fullName>
    </alternativeName>
</protein>
<feature type="initiator methionine" description="Removed" evidence="1">
    <location>
        <position position="1"/>
    </location>
</feature>
<feature type="chain" id="PRO_0000056928" description="Asparagine synthetase [glutamine-hydrolyzing]">
    <location>
        <begin position="2"/>
        <end position="525"/>
    </location>
</feature>
<feature type="domain" description="Glutamine amidotransferase type-2" evidence="2">
    <location>
        <begin position="2"/>
        <end position="185"/>
    </location>
</feature>
<feature type="domain" description="Asparagine synthetase">
    <location>
        <begin position="193"/>
        <end position="517"/>
    </location>
</feature>
<feature type="active site" description="For GATase activity" evidence="1">
    <location>
        <position position="2"/>
    </location>
</feature>
<feature type="binding site" evidence="1">
    <location>
        <begin position="50"/>
        <end position="54"/>
    </location>
    <ligand>
        <name>L-glutamine</name>
        <dbReference type="ChEBI" id="CHEBI:58359"/>
    </ligand>
</feature>
<feature type="binding site" evidence="1">
    <location>
        <begin position="75"/>
        <end position="77"/>
    </location>
    <ligand>
        <name>L-glutamine</name>
        <dbReference type="ChEBI" id="CHEBI:58359"/>
    </ligand>
</feature>
<feature type="binding site" evidence="1">
    <location>
        <position position="98"/>
    </location>
    <ligand>
        <name>L-glutamine</name>
        <dbReference type="ChEBI" id="CHEBI:58359"/>
    </ligand>
</feature>
<feature type="binding site" evidence="1">
    <location>
        <position position="231"/>
    </location>
    <ligand>
        <name>ATP</name>
        <dbReference type="ChEBI" id="CHEBI:30616"/>
    </ligand>
</feature>
<feature type="binding site" evidence="1">
    <location>
        <position position="267"/>
    </location>
    <ligand>
        <name>ATP</name>
        <dbReference type="ChEBI" id="CHEBI:30616"/>
    </ligand>
</feature>
<feature type="binding site" evidence="1">
    <location>
        <begin position="341"/>
        <end position="342"/>
    </location>
    <ligand>
        <name>ATP</name>
        <dbReference type="ChEBI" id="CHEBI:30616"/>
    </ligand>
</feature>
<feature type="site" description="Important for beta-aspartyl-AMP intermediate formation" evidence="1">
    <location>
        <position position="343"/>
    </location>
</feature>
<name>ASNS_SANAU</name>
<accession>O24338</accession>
<reference key="1">
    <citation type="online journal article" date="1997" name="Plant Gene Register">
        <title>Nucleotide sequence of cDNA encoding asparagine synthetase from Sandersonia aurantiaca.</title>
        <authorList>
            <person name="Eason J.R."/>
            <person name="King G.A."/>
        </authorList>
        <locator>PGR97-112</locator>
    </citation>
    <scope>NUCLEOTIDE SEQUENCE [MRNA]</scope>
    <source>
        <tissue>Tepal</tissue>
    </source>
</reference>
<organism>
    <name type="scientific">Sandersonia aurantiaca</name>
    <name type="common">Christmas-bells</name>
    <name type="synonym">Chinese-lantern lily</name>
    <dbReference type="NCBI Taxonomy" id="61864"/>
    <lineage>
        <taxon>Eukaryota</taxon>
        <taxon>Viridiplantae</taxon>
        <taxon>Streptophyta</taxon>
        <taxon>Embryophyta</taxon>
        <taxon>Tracheophyta</taxon>
        <taxon>Spermatophyta</taxon>
        <taxon>Magnoliopsida</taxon>
        <taxon>Liliopsida</taxon>
        <taxon>Liliales</taxon>
        <taxon>Liliaceae</taxon>
        <taxon>Sandersonia</taxon>
    </lineage>
</organism>